<reference key="1">
    <citation type="journal article" date="2009" name="BMC Genomics">
        <title>Analysis of the Rickettsia africae genome reveals that virulence acquisition in Rickettsia species may be explained by genome reduction.</title>
        <authorList>
            <person name="Fournier P.-E."/>
            <person name="El Karkouri K."/>
            <person name="Leroy Q."/>
            <person name="Robert C."/>
            <person name="Giumelli B."/>
            <person name="Renesto P."/>
            <person name="Socolovschi C."/>
            <person name="Parola P."/>
            <person name="Audic S."/>
            <person name="Raoult D."/>
        </authorList>
    </citation>
    <scope>NUCLEOTIDE SEQUENCE [LARGE SCALE GENOMIC DNA]</scope>
    <source>
        <strain>ESF-5</strain>
    </source>
</reference>
<name>MNMA_RICAE</name>
<dbReference type="EC" id="2.8.1.13" evidence="1"/>
<dbReference type="EMBL" id="CP001612">
    <property type="protein sequence ID" value="ACP53321.1"/>
    <property type="molecule type" value="Genomic_DNA"/>
</dbReference>
<dbReference type="RefSeq" id="WP_012719564.1">
    <property type="nucleotide sequence ID" value="NC_012633.1"/>
</dbReference>
<dbReference type="SMR" id="C3PN11"/>
<dbReference type="KEGG" id="raf:RAF_ORF0384"/>
<dbReference type="HOGENOM" id="CLU_035188_0_1_5"/>
<dbReference type="Proteomes" id="UP000002305">
    <property type="component" value="Chromosome"/>
</dbReference>
<dbReference type="GO" id="GO:0005737">
    <property type="term" value="C:cytoplasm"/>
    <property type="evidence" value="ECO:0007669"/>
    <property type="project" value="UniProtKB-SubCell"/>
</dbReference>
<dbReference type="GO" id="GO:0005524">
    <property type="term" value="F:ATP binding"/>
    <property type="evidence" value="ECO:0007669"/>
    <property type="project" value="UniProtKB-KW"/>
</dbReference>
<dbReference type="GO" id="GO:0000049">
    <property type="term" value="F:tRNA binding"/>
    <property type="evidence" value="ECO:0007669"/>
    <property type="project" value="UniProtKB-KW"/>
</dbReference>
<dbReference type="GO" id="GO:0103016">
    <property type="term" value="F:tRNA-uridine 2-sulfurtransferase activity"/>
    <property type="evidence" value="ECO:0007669"/>
    <property type="project" value="UniProtKB-EC"/>
</dbReference>
<dbReference type="GO" id="GO:0002143">
    <property type="term" value="P:tRNA wobble position uridine thiolation"/>
    <property type="evidence" value="ECO:0007669"/>
    <property type="project" value="TreeGrafter"/>
</dbReference>
<dbReference type="CDD" id="cd01998">
    <property type="entry name" value="MnmA_TRMU-like"/>
    <property type="match status" value="1"/>
</dbReference>
<dbReference type="FunFam" id="2.30.30.280:FF:000001">
    <property type="entry name" value="tRNA-specific 2-thiouridylase MnmA"/>
    <property type="match status" value="1"/>
</dbReference>
<dbReference type="FunFam" id="2.40.30.10:FF:000127">
    <property type="entry name" value="tRNA-specific 2-thiouridylase MnmA"/>
    <property type="match status" value="1"/>
</dbReference>
<dbReference type="FunFam" id="3.40.50.620:FF:000115">
    <property type="entry name" value="tRNA-specific 2-thiouridylase MnmA"/>
    <property type="match status" value="1"/>
</dbReference>
<dbReference type="Gene3D" id="2.30.30.280">
    <property type="entry name" value="Adenine nucleotide alpha hydrolases-like domains"/>
    <property type="match status" value="1"/>
</dbReference>
<dbReference type="Gene3D" id="3.40.50.620">
    <property type="entry name" value="HUPs"/>
    <property type="match status" value="1"/>
</dbReference>
<dbReference type="Gene3D" id="2.40.30.10">
    <property type="entry name" value="Translation factors"/>
    <property type="match status" value="1"/>
</dbReference>
<dbReference type="HAMAP" id="MF_00144">
    <property type="entry name" value="tRNA_thiouridyl_MnmA"/>
    <property type="match status" value="1"/>
</dbReference>
<dbReference type="InterPro" id="IPR004506">
    <property type="entry name" value="MnmA-like"/>
</dbReference>
<dbReference type="InterPro" id="IPR046885">
    <property type="entry name" value="MnmA-like_C"/>
</dbReference>
<dbReference type="InterPro" id="IPR046884">
    <property type="entry name" value="MnmA-like_central"/>
</dbReference>
<dbReference type="InterPro" id="IPR023382">
    <property type="entry name" value="MnmA-like_central_sf"/>
</dbReference>
<dbReference type="InterPro" id="IPR014729">
    <property type="entry name" value="Rossmann-like_a/b/a_fold"/>
</dbReference>
<dbReference type="NCBIfam" id="NF001138">
    <property type="entry name" value="PRK00143.1"/>
    <property type="match status" value="1"/>
</dbReference>
<dbReference type="NCBIfam" id="TIGR00420">
    <property type="entry name" value="trmU"/>
    <property type="match status" value="1"/>
</dbReference>
<dbReference type="PANTHER" id="PTHR11933:SF5">
    <property type="entry name" value="MITOCHONDRIAL TRNA-SPECIFIC 2-THIOURIDYLASE 1"/>
    <property type="match status" value="1"/>
</dbReference>
<dbReference type="PANTHER" id="PTHR11933">
    <property type="entry name" value="TRNA 5-METHYLAMINOMETHYL-2-THIOURIDYLATE -METHYLTRANSFERASE"/>
    <property type="match status" value="1"/>
</dbReference>
<dbReference type="Pfam" id="PF03054">
    <property type="entry name" value="tRNA_Me_trans"/>
    <property type="match status" value="1"/>
</dbReference>
<dbReference type="Pfam" id="PF20258">
    <property type="entry name" value="tRNA_Me_trans_C"/>
    <property type="match status" value="1"/>
</dbReference>
<dbReference type="Pfam" id="PF20259">
    <property type="entry name" value="tRNA_Me_trans_M"/>
    <property type="match status" value="1"/>
</dbReference>
<dbReference type="SUPFAM" id="SSF52402">
    <property type="entry name" value="Adenine nucleotide alpha hydrolases-like"/>
    <property type="match status" value="1"/>
</dbReference>
<feature type="chain" id="PRO_1000203313" description="tRNA-specific 2-thiouridylase MnmA">
    <location>
        <begin position="1"/>
        <end position="365"/>
    </location>
</feature>
<feature type="region of interest" description="Interaction with tRNA" evidence="1">
    <location>
        <begin position="154"/>
        <end position="156"/>
    </location>
</feature>
<feature type="active site" description="Nucleophile" evidence="1">
    <location>
        <position position="108"/>
    </location>
</feature>
<feature type="active site" description="Cysteine persulfide intermediate" evidence="1">
    <location>
        <position position="204"/>
    </location>
</feature>
<feature type="binding site" evidence="1">
    <location>
        <begin position="14"/>
        <end position="21"/>
    </location>
    <ligand>
        <name>ATP</name>
        <dbReference type="ChEBI" id="CHEBI:30616"/>
    </ligand>
</feature>
<feature type="binding site" evidence="1">
    <location>
        <position position="40"/>
    </location>
    <ligand>
        <name>ATP</name>
        <dbReference type="ChEBI" id="CHEBI:30616"/>
    </ligand>
</feature>
<feature type="binding site" evidence="1">
    <location>
        <position position="132"/>
    </location>
    <ligand>
        <name>ATP</name>
        <dbReference type="ChEBI" id="CHEBI:30616"/>
    </ligand>
</feature>
<feature type="site" description="Interaction with tRNA" evidence="1">
    <location>
        <position position="133"/>
    </location>
</feature>
<feature type="site" description="Interaction with tRNA" evidence="1">
    <location>
        <position position="344"/>
    </location>
</feature>
<feature type="disulfide bond" description="Alternate" evidence="1">
    <location>
        <begin position="108"/>
        <end position="204"/>
    </location>
</feature>
<comment type="function">
    <text evidence="1">Catalyzes the 2-thiolation of uridine at the wobble position (U34) of tRNA, leading to the formation of s(2)U34.</text>
</comment>
<comment type="catalytic activity">
    <reaction evidence="1">
        <text>S-sulfanyl-L-cysteinyl-[protein] + uridine(34) in tRNA + AH2 + ATP = 2-thiouridine(34) in tRNA + L-cysteinyl-[protein] + A + AMP + diphosphate + H(+)</text>
        <dbReference type="Rhea" id="RHEA:47032"/>
        <dbReference type="Rhea" id="RHEA-COMP:10131"/>
        <dbReference type="Rhea" id="RHEA-COMP:11726"/>
        <dbReference type="Rhea" id="RHEA-COMP:11727"/>
        <dbReference type="Rhea" id="RHEA-COMP:11728"/>
        <dbReference type="ChEBI" id="CHEBI:13193"/>
        <dbReference type="ChEBI" id="CHEBI:15378"/>
        <dbReference type="ChEBI" id="CHEBI:17499"/>
        <dbReference type="ChEBI" id="CHEBI:29950"/>
        <dbReference type="ChEBI" id="CHEBI:30616"/>
        <dbReference type="ChEBI" id="CHEBI:33019"/>
        <dbReference type="ChEBI" id="CHEBI:61963"/>
        <dbReference type="ChEBI" id="CHEBI:65315"/>
        <dbReference type="ChEBI" id="CHEBI:87170"/>
        <dbReference type="ChEBI" id="CHEBI:456215"/>
        <dbReference type="EC" id="2.8.1.13"/>
    </reaction>
</comment>
<comment type="subcellular location">
    <subcellularLocation>
        <location evidence="1">Cytoplasm</location>
    </subcellularLocation>
</comment>
<comment type="similarity">
    <text evidence="1">Belongs to the MnmA/TRMU family.</text>
</comment>
<evidence type="ECO:0000255" key="1">
    <source>
        <dbReference type="HAMAP-Rule" id="MF_00144"/>
    </source>
</evidence>
<sequence length="365" mass="40287">MINLGDKQSTIVVAMSGGVDSSAVAAMLHEQGHNVIGITLQLYDHGMAVGKKNACCAGQDIYDAKMVANKLGIPHYVLDYESKFKESVIDNFVDSYLQGETPLPCVQCNKSVKFRDLIKTARELGADKLATGHYVRKINGDNGAELHTGLDPAKDQSYFLFTTTKEQLEYLRFPLGGLTKDETRKLASKFGLEVADKPDSQDICFIPDGNYKSVINKIRPNSSESGKIIHVNGFELGEHSGIINYTIGQRRGLGIAYNEPLYVVKIDPKDNVVYVGPESALNVQEFIIRDVNWLADEIKDNEKLEVAVKIRSTRPPRLAEISKFGDDKMKVKFLCEEKAVAPGQACVIYAGARVLGGGWITREIR</sequence>
<accession>C3PN11</accession>
<protein>
    <recommendedName>
        <fullName evidence="1">tRNA-specific 2-thiouridylase MnmA</fullName>
        <ecNumber evidence="1">2.8.1.13</ecNumber>
    </recommendedName>
</protein>
<organism>
    <name type="scientific">Rickettsia africae (strain ESF-5)</name>
    <dbReference type="NCBI Taxonomy" id="347255"/>
    <lineage>
        <taxon>Bacteria</taxon>
        <taxon>Pseudomonadati</taxon>
        <taxon>Pseudomonadota</taxon>
        <taxon>Alphaproteobacteria</taxon>
        <taxon>Rickettsiales</taxon>
        <taxon>Rickettsiaceae</taxon>
        <taxon>Rickettsieae</taxon>
        <taxon>Rickettsia</taxon>
        <taxon>spotted fever group</taxon>
    </lineage>
</organism>
<proteinExistence type="inferred from homology"/>
<keyword id="KW-0067">ATP-binding</keyword>
<keyword id="KW-0963">Cytoplasm</keyword>
<keyword id="KW-1015">Disulfide bond</keyword>
<keyword id="KW-0547">Nucleotide-binding</keyword>
<keyword id="KW-0694">RNA-binding</keyword>
<keyword id="KW-0808">Transferase</keyword>
<keyword id="KW-0819">tRNA processing</keyword>
<keyword id="KW-0820">tRNA-binding</keyword>
<gene>
    <name evidence="1" type="primary">mnmA</name>
    <name type="ordered locus">RAF_ORF0384</name>
</gene>